<name>GLMM_FRATN</name>
<proteinExistence type="inferred from homology"/>
<organism>
    <name type="scientific">Francisella tularensis subsp. novicida (strain U112)</name>
    <dbReference type="NCBI Taxonomy" id="401614"/>
    <lineage>
        <taxon>Bacteria</taxon>
        <taxon>Pseudomonadati</taxon>
        <taxon>Pseudomonadota</taxon>
        <taxon>Gammaproteobacteria</taxon>
        <taxon>Thiotrichales</taxon>
        <taxon>Francisellaceae</taxon>
        <taxon>Francisella</taxon>
    </lineage>
</organism>
<sequence length="443" mass="48146">MAKYFGTDGIRGEVANSTITAEFTQKLGNAVGSLINQKNYPKFVIVGQDTRSSGGFLKFALVSGLNAAGIDVLDLGVVPTPVVAFMTVKHRAAAGFVITASHNKFTDNGIKLFSSNGFKLDDALEEEVEDMIDGDFIYQPQFKFGSYKILANAIDEYIESIHSRFAKFVNYKGKVVVDCAHGAASHNFEALLDKFGIDYVSIASNPDGLNINVGCGATCISNIKKAVKEQKADLGISLDGDADRIIIVDENGQEIDGDGILNILAQYSDICGGTNGIVGTQMTNMSYENHYRANKIPFIRSKVGDRYVLEDLVKYGYKIGGESSGHVINLNFGTTGDGLFTAIQLLAIFSQADKPVSEFKLQGELMQQTLINVPLAKKVTREDLQKVASDVNDVEKRLGNRGRVLLRPSGTEPVLRVMVEADDKSLATNEAEYLVEKVKQKLV</sequence>
<accession>A0Q8C5</accession>
<reference key="1">
    <citation type="journal article" date="2007" name="Genome Biol.">
        <title>Comparison of Francisella tularensis genomes reveals evolutionary events associated with the emergence of human pathogenic strains.</title>
        <authorList>
            <person name="Rohmer L."/>
            <person name="Fong C."/>
            <person name="Abmayr S."/>
            <person name="Wasnick M."/>
            <person name="Larson Freeman T.J."/>
            <person name="Radey M."/>
            <person name="Guina T."/>
            <person name="Svensson K."/>
            <person name="Hayden H.S."/>
            <person name="Jacobs M."/>
            <person name="Gallagher L.A."/>
            <person name="Manoil C."/>
            <person name="Ernst R.K."/>
            <person name="Drees B."/>
            <person name="Buckley D."/>
            <person name="Haugen E."/>
            <person name="Bovee D."/>
            <person name="Zhou Y."/>
            <person name="Chang J."/>
            <person name="Levy R."/>
            <person name="Lim R."/>
            <person name="Gillett W."/>
            <person name="Guenthener D."/>
            <person name="Kang A."/>
            <person name="Shaffer S.A."/>
            <person name="Taylor G."/>
            <person name="Chen J."/>
            <person name="Gallis B."/>
            <person name="D'Argenio D.A."/>
            <person name="Forsman M."/>
            <person name="Olson M.V."/>
            <person name="Goodlett D.R."/>
            <person name="Kaul R."/>
            <person name="Miller S.I."/>
            <person name="Brittnacher M.J."/>
        </authorList>
    </citation>
    <scope>NUCLEOTIDE SEQUENCE [LARGE SCALE GENOMIC DNA]</scope>
    <source>
        <strain>U112</strain>
    </source>
</reference>
<gene>
    <name evidence="1" type="primary">glmM</name>
    <name type="ordered locus">FTN_1632</name>
</gene>
<protein>
    <recommendedName>
        <fullName evidence="1">Phosphoglucosamine mutase</fullName>
        <ecNumber evidence="1">5.4.2.10</ecNumber>
    </recommendedName>
</protein>
<feature type="chain" id="PRO_0000301315" description="Phosphoglucosamine mutase">
    <location>
        <begin position="1"/>
        <end position="443"/>
    </location>
</feature>
<feature type="active site" description="Phosphoserine intermediate" evidence="1">
    <location>
        <position position="101"/>
    </location>
</feature>
<feature type="binding site" description="via phosphate group" evidence="1">
    <location>
        <position position="101"/>
    </location>
    <ligand>
        <name>Mg(2+)</name>
        <dbReference type="ChEBI" id="CHEBI:18420"/>
    </ligand>
</feature>
<feature type="binding site" evidence="1">
    <location>
        <position position="239"/>
    </location>
    <ligand>
        <name>Mg(2+)</name>
        <dbReference type="ChEBI" id="CHEBI:18420"/>
    </ligand>
</feature>
<feature type="binding site" evidence="1">
    <location>
        <position position="241"/>
    </location>
    <ligand>
        <name>Mg(2+)</name>
        <dbReference type="ChEBI" id="CHEBI:18420"/>
    </ligand>
</feature>
<feature type="binding site" evidence="1">
    <location>
        <position position="243"/>
    </location>
    <ligand>
        <name>Mg(2+)</name>
        <dbReference type="ChEBI" id="CHEBI:18420"/>
    </ligand>
</feature>
<feature type="modified residue" description="Phosphoserine" evidence="1">
    <location>
        <position position="101"/>
    </location>
</feature>
<evidence type="ECO:0000255" key="1">
    <source>
        <dbReference type="HAMAP-Rule" id="MF_01554"/>
    </source>
</evidence>
<comment type="function">
    <text evidence="1">Catalyzes the conversion of glucosamine-6-phosphate to glucosamine-1-phosphate.</text>
</comment>
<comment type="catalytic activity">
    <reaction evidence="1">
        <text>alpha-D-glucosamine 1-phosphate = D-glucosamine 6-phosphate</text>
        <dbReference type="Rhea" id="RHEA:23424"/>
        <dbReference type="ChEBI" id="CHEBI:58516"/>
        <dbReference type="ChEBI" id="CHEBI:58725"/>
        <dbReference type="EC" id="5.4.2.10"/>
    </reaction>
</comment>
<comment type="cofactor">
    <cofactor evidence="1">
        <name>Mg(2+)</name>
        <dbReference type="ChEBI" id="CHEBI:18420"/>
    </cofactor>
    <text evidence="1">Binds 1 Mg(2+) ion per subunit.</text>
</comment>
<comment type="PTM">
    <text evidence="1">Activated by phosphorylation.</text>
</comment>
<comment type="similarity">
    <text evidence="1">Belongs to the phosphohexose mutase family.</text>
</comment>
<dbReference type="EC" id="5.4.2.10" evidence="1"/>
<dbReference type="EMBL" id="CP000439">
    <property type="protein sequence ID" value="ABK90490.1"/>
    <property type="molecule type" value="Genomic_DNA"/>
</dbReference>
<dbReference type="RefSeq" id="WP_003041237.1">
    <property type="nucleotide sequence ID" value="NC_008601.1"/>
</dbReference>
<dbReference type="SMR" id="A0Q8C5"/>
<dbReference type="KEGG" id="ftn:FTN_1632"/>
<dbReference type="KEGG" id="ftx:AW25_357"/>
<dbReference type="BioCyc" id="FTUL401614:G1G75-1691-MONOMER"/>
<dbReference type="Proteomes" id="UP000000762">
    <property type="component" value="Chromosome"/>
</dbReference>
<dbReference type="GO" id="GO:0005829">
    <property type="term" value="C:cytosol"/>
    <property type="evidence" value="ECO:0007669"/>
    <property type="project" value="TreeGrafter"/>
</dbReference>
<dbReference type="GO" id="GO:0000287">
    <property type="term" value="F:magnesium ion binding"/>
    <property type="evidence" value="ECO:0007669"/>
    <property type="project" value="UniProtKB-UniRule"/>
</dbReference>
<dbReference type="GO" id="GO:0008966">
    <property type="term" value="F:phosphoglucosamine mutase activity"/>
    <property type="evidence" value="ECO:0007669"/>
    <property type="project" value="UniProtKB-UniRule"/>
</dbReference>
<dbReference type="GO" id="GO:0004615">
    <property type="term" value="F:phosphomannomutase activity"/>
    <property type="evidence" value="ECO:0007669"/>
    <property type="project" value="TreeGrafter"/>
</dbReference>
<dbReference type="GO" id="GO:0005975">
    <property type="term" value="P:carbohydrate metabolic process"/>
    <property type="evidence" value="ECO:0007669"/>
    <property type="project" value="InterPro"/>
</dbReference>
<dbReference type="GO" id="GO:0009252">
    <property type="term" value="P:peptidoglycan biosynthetic process"/>
    <property type="evidence" value="ECO:0007669"/>
    <property type="project" value="TreeGrafter"/>
</dbReference>
<dbReference type="GO" id="GO:0006048">
    <property type="term" value="P:UDP-N-acetylglucosamine biosynthetic process"/>
    <property type="evidence" value="ECO:0007669"/>
    <property type="project" value="TreeGrafter"/>
</dbReference>
<dbReference type="CDD" id="cd05802">
    <property type="entry name" value="GlmM"/>
    <property type="match status" value="1"/>
</dbReference>
<dbReference type="FunFam" id="3.30.310.50:FF:000001">
    <property type="entry name" value="Phosphoglucosamine mutase"/>
    <property type="match status" value="1"/>
</dbReference>
<dbReference type="FunFam" id="3.40.120.10:FF:000001">
    <property type="entry name" value="Phosphoglucosamine mutase"/>
    <property type="match status" value="1"/>
</dbReference>
<dbReference type="FunFam" id="3.40.120.10:FF:000003">
    <property type="entry name" value="Phosphoglucosamine mutase"/>
    <property type="match status" value="1"/>
</dbReference>
<dbReference type="Gene3D" id="3.40.120.10">
    <property type="entry name" value="Alpha-D-Glucose-1,6-Bisphosphate, subunit A, domain 3"/>
    <property type="match status" value="3"/>
</dbReference>
<dbReference type="Gene3D" id="3.30.310.50">
    <property type="entry name" value="Alpha-D-phosphohexomutase, C-terminal domain"/>
    <property type="match status" value="1"/>
</dbReference>
<dbReference type="HAMAP" id="MF_01554_B">
    <property type="entry name" value="GlmM_B"/>
    <property type="match status" value="1"/>
</dbReference>
<dbReference type="InterPro" id="IPR005844">
    <property type="entry name" value="A-D-PHexomutase_a/b/a-I"/>
</dbReference>
<dbReference type="InterPro" id="IPR016055">
    <property type="entry name" value="A-D-PHexomutase_a/b/a-I/II/III"/>
</dbReference>
<dbReference type="InterPro" id="IPR005845">
    <property type="entry name" value="A-D-PHexomutase_a/b/a-II"/>
</dbReference>
<dbReference type="InterPro" id="IPR005846">
    <property type="entry name" value="A-D-PHexomutase_a/b/a-III"/>
</dbReference>
<dbReference type="InterPro" id="IPR005843">
    <property type="entry name" value="A-D-PHexomutase_C"/>
</dbReference>
<dbReference type="InterPro" id="IPR036900">
    <property type="entry name" value="A-D-PHexomutase_C_sf"/>
</dbReference>
<dbReference type="InterPro" id="IPR005841">
    <property type="entry name" value="Alpha-D-phosphohexomutase_SF"/>
</dbReference>
<dbReference type="InterPro" id="IPR006352">
    <property type="entry name" value="GlmM_bact"/>
</dbReference>
<dbReference type="InterPro" id="IPR050060">
    <property type="entry name" value="Phosphoglucosamine_mutase"/>
</dbReference>
<dbReference type="NCBIfam" id="TIGR01455">
    <property type="entry name" value="glmM"/>
    <property type="match status" value="1"/>
</dbReference>
<dbReference type="NCBIfam" id="NF008139">
    <property type="entry name" value="PRK10887.1"/>
    <property type="match status" value="1"/>
</dbReference>
<dbReference type="PANTHER" id="PTHR42946:SF1">
    <property type="entry name" value="PHOSPHOGLUCOMUTASE (ALPHA-D-GLUCOSE-1,6-BISPHOSPHATE-DEPENDENT)"/>
    <property type="match status" value="1"/>
</dbReference>
<dbReference type="PANTHER" id="PTHR42946">
    <property type="entry name" value="PHOSPHOHEXOSE MUTASE"/>
    <property type="match status" value="1"/>
</dbReference>
<dbReference type="Pfam" id="PF02878">
    <property type="entry name" value="PGM_PMM_I"/>
    <property type="match status" value="1"/>
</dbReference>
<dbReference type="Pfam" id="PF02879">
    <property type="entry name" value="PGM_PMM_II"/>
    <property type="match status" value="1"/>
</dbReference>
<dbReference type="Pfam" id="PF02880">
    <property type="entry name" value="PGM_PMM_III"/>
    <property type="match status" value="1"/>
</dbReference>
<dbReference type="Pfam" id="PF00408">
    <property type="entry name" value="PGM_PMM_IV"/>
    <property type="match status" value="1"/>
</dbReference>
<dbReference type="PRINTS" id="PR00509">
    <property type="entry name" value="PGMPMM"/>
</dbReference>
<dbReference type="SUPFAM" id="SSF55957">
    <property type="entry name" value="Phosphoglucomutase, C-terminal domain"/>
    <property type="match status" value="1"/>
</dbReference>
<dbReference type="SUPFAM" id="SSF53738">
    <property type="entry name" value="Phosphoglucomutase, first 3 domains"/>
    <property type="match status" value="3"/>
</dbReference>
<keyword id="KW-0413">Isomerase</keyword>
<keyword id="KW-0460">Magnesium</keyword>
<keyword id="KW-0479">Metal-binding</keyword>
<keyword id="KW-0597">Phosphoprotein</keyword>